<organism>
    <name type="scientific">Pongo abelii</name>
    <name type="common">Sumatran orangutan</name>
    <name type="synonym">Pongo pygmaeus abelii</name>
    <dbReference type="NCBI Taxonomy" id="9601"/>
    <lineage>
        <taxon>Eukaryota</taxon>
        <taxon>Metazoa</taxon>
        <taxon>Chordata</taxon>
        <taxon>Craniata</taxon>
        <taxon>Vertebrata</taxon>
        <taxon>Euteleostomi</taxon>
        <taxon>Mammalia</taxon>
        <taxon>Eutheria</taxon>
        <taxon>Euarchontoglires</taxon>
        <taxon>Primates</taxon>
        <taxon>Haplorrhini</taxon>
        <taxon>Catarrhini</taxon>
        <taxon>Hominidae</taxon>
        <taxon>Pongo</taxon>
    </lineage>
</organism>
<name>ZC11A_PONAB</name>
<evidence type="ECO:0000250" key="1">
    <source>
        <dbReference type="UniProtKB" id="O75152"/>
    </source>
</evidence>
<evidence type="ECO:0000255" key="2"/>
<evidence type="ECO:0000255" key="3">
    <source>
        <dbReference type="PROSITE-ProRule" id="PRU00723"/>
    </source>
</evidence>
<evidence type="ECO:0000256" key="4">
    <source>
        <dbReference type="SAM" id="MobiDB-lite"/>
    </source>
</evidence>
<sequence length="811" mass="89320">MPNQGEDCYFFFFYSTCTKGDSCPFRHCEAALGNETVCTLWQEGRCFRQVCRFRHMEIDKKRSEIPCYWENQPTGCQKLNCAFHHNRGRYVDGLFLPPSKTVLPTVPESPEEEVKASQLSVQQNKLSVQSNPSPQLRSVMKVESSENVPSPTHPPVVINAADDDEDDDDQFSEEGDETKTPTLQPTPEVHNGLRVTSVRKPAVNIKQGECLNFGIKTLEEIKSKKMKEKSKKQGEGSSGVSSLLLHPEPVPGPEKENVRTVVRTVTLSTKQGEEPLVRLSLTERLGKRKFSAGGDSDPPLKRSLAQRLGKKVEAPEANIDKTPKRAQVSKSLKERLGMSADPNNEDATEKVNKVGEIHVKTLEEILLERASQKRGELQTKLKTEGPSKTDDSTSGARSSSTIRIKTFSEVLAEKKHRQQEAERQKSKKDTTCIKLKTDSEIKKTVVLPPIVASKGQSEEPAGKTKSMQEVHIKTLEEIKLEKALRVQQSSESSTSSPSQHEATPGARRLLRIAKRTGMKEEKNLQEGNEVDSQSSIRTEAKEASGETTGVDITNIQVKRCETMREKHMQKQQEREKSVLTPLRGDVASCNTQVAEKPVLTAVPGITRHLTKRLPTKSSQKVEVEISGIGDSVLNVKYAAQTLEKRGKAKPKVNVKPSVVKVVSSPKLAPKRKAVEMHPAVIAAVKPLSSSSVLQEPPAKKAAVAVVPLVSEDKSVTVPEAENPRDSLVLPPTQSSSDSSPPEVSGPSSSQMSMKTRRLSSASTGKPQLSVEDDFEKLIWEISGGKLEAEIDLDPGKDEDDLLLELSEMIDS</sequence>
<accession>Q5REG6</accession>
<dbReference type="EMBL" id="CR857563">
    <property type="protein sequence ID" value="CAH89841.1"/>
    <property type="molecule type" value="mRNA"/>
</dbReference>
<dbReference type="RefSeq" id="NP_001124854.1">
    <property type="nucleotide sequence ID" value="NM_001131382.1"/>
</dbReference>
<dbReference type="FunCoup" id="Q5REG6">
    <property type="interactions" value="1900"/>
</dbReference>
<dbReference type="STRING" id="9601.ENSPPYP00000000361"/>
<dbReference type="GeneID" id="100171715"/>
<dbReference type="KEGG" id="pon:100171715"/>
<dbReference type="CTD" id="9877"/>
<dbReference type="eggNOG" id="KOG4791">
    <property type="taxonomic scope" value="Eukaryota"/>
</dbReference>
<dbReference type="InParanoid" id="Q5REG6"/>
<dbReference type="OrthoDB" id="5395350at2759"/>
<dbReference type="Proteomes" id="UP000001595">
    <property type="component" value="Unplaced"/>
</dbReference>
<dbReference type="GO" id="GO:0016607">
    <property type="term" value="C:nuclear speck"/>
    <property type="evidence" value="ECO:0007669"/>
    <property type="project" value="UniProtKB-SubCell"/>
</dbReference>
<dbReference type="GO" id="GO:0008270">
    <property type="term" value="F:zinc ion binding"/>
    <property type="evidence" value="ECO:0007669"/>
    <property type="project" value="UniProtKB-KW"/>
</dbReference>
<dbReference type="GO" id="GO:0016973">
    <property type="term" value="P:poly(A)+ mRNA export from nucleus"/>
    <property type="evidence" value="ECO:0000250"/>
    <property type="project" value="UniProtKB"/>
</dbReference>
<dbReference type="FunFam" id="4.10.1000.10:FF:000024">
    <property type="entry name" value="Zinc finger CCCH domain-containing protein 11A"/>
    <property type="match status" value="1"/>
</dbReference>
<dbReference type="Gene3D" id="4.10.1000.10">
    <property type="entry name" value="Zinc finger, CCCH-type"/>
    <property type="match status" value="1"/>
</dbReference>
<dbReference type="InterPro" id="IPR041686">
    <property type="entry name" value="Znf-CCCH_3"/>
</dbReference>
<dbReference type="InterPro" id="IPR000571">
    <property type="entry name" value="Znf_CCCH"/>
</dbReference>
<dbReference type="PANTHER" id="PTHR15725:SF2">
    <property type="entry name" value="ZINC FINGER CCCH DOMAIN-CONTAINING PROTEIN 11A"/>
    <property type="match status" value="1"/>
</dbReference>
<dbReference type="PANTHER" id="PTHR15725">
    <property type="entry name" value="ZN-FINGER, C-X8-C-X5-C-X3-H TYPE-CONTAINING"/>
    <property type="match status" value="1"/>
</dbReference>
<dbReference type="Pfam" id="PF15663">
    <property type="entry name" value="zf-CCCH_3"/>
    <property type="match status" value="1"/>
</dbReference>
<dbReference type="SMART" id="SM00356">
    <property type="entry name" value="ZnF_C3H1"/>
    <property type="match status" value="3"/>
</dbReference>
<dbReference type="PROSITE" id="PS50103">
    <property type="entry name" value="ZF_C3H1"/>
    <property type="match status" value="2"/>
</dbReference>
<gene>
    <name type="primary">ZC3H11A</name>
</gene>
<reference key="1">
    <citation type="submission" date="2004-11" db="EMBL/GenBank/DDBJ databases">
        <authorList>
            <consortium name="The German cDNA consortium"/>
        </authorList>
    </citation>
    <scope>NUCLEOTIDE SEQUENCE [LARGE SCALE MRNA]</scope>
    <source>
        <tissue>Kidney</tissue>
    </source>
</reference>
<comment type="function">
    <text evidence="1">Through its association with TREX complex components, may participate in the export and post-transcriptional coordination of selected mRNA transcripts, including those required to maintain the metabolic processes in embryonic cells. Binds RNA.</text>
</comment>
<comment type="subunit">
    <text evidence="1">Interacts with TREX complex components THOC2, DDX39 and POLDIP3; the interactions are ATP-dependent. Interacts with PABPN1; this interaction retains ZC3H11A in nuclear speckles. Interacts with KPNA3.</text>
</comment>
<comment type="subcellular location">
    <subcellularLocation>
        <location evidence="1">Nucleus speckle</location>
    </subcellularLocation>
    <text evidence="1">Retained in nuclear speckles though interaction with PABPN1.</text>
</comment>
<keyword id="KW-0175">Coiled coil</keyword>
<keyword id="KW-1017">Isopeptide bond</keyword>
<keyword id="KW-0479">Metal-binding</keyword>
<keyword id="KW-0509">mRNA transport</keyword>
<keyword id="KW-0539">Nucleus</keyword>
<keyword id="KW-0597">Phosphoprotein</keyword>
<keyword id="KW-1185">Reference proteome</keyword>
<keyword id="KW-0677">Repeat</keyword>
<keyword id="KW-0813">Transport</keyword>
<keyword id="KW-0832">Ubl conjugation</keyword>
<keyword id="KW-0862">Zinc</keyword>
<keyword id="KW-0863">Zinc-finger</keyword>
<protein>
    <recommendedName>
        <fullName>Zinc finger CCCH domain-containing protein 11A</fullName>
    </recommendedName>
</protein>
<proteinExistence type="evidence at transcript level"/>
<feature type="chain" id="PRO_0000213907" description="Zinc finger CCCH domain-containing protein 11A">
    <location>
        <begin position="1"/>
        <end position="811"/>
    </location>
</feature>
<feature type="zinc finger region" description="C3H1-type 1" evidence="3">
    <location>
        <begin position="2"/>
        <end position="30"/>
    </location>
</feature>
<feature type="zinc finger region" description="C3H1-type 2" evidence="3">
    <location>
        <begin position="32"/>
        <end position="58"/>
    </location>
</feature>
<feature type="zinc finger region" description="C3H1-type 3" evidence="3">
    <location>
        <begin position="61"/>
        <end position="87"/>
    </location>
</feature>
<feature type="region of interest" description="Disordered" evidence="4">
    <location>
        <begin position="140"/>
        <end position="195"/>
    </location>
</feature>
<feature type="region of interest" description="Disordered" evidence="4">
    <location>
        <begin position="224"/>
        <end position="258"/>
    </location>
</feature>
<feature type="region of interest" description="Disordered" evidence="4">
    <location>
        <begin position="286"/>
        <end position="352"/>
    </location>
</feature>
<feature type="region of interest" description="Disordered" evidence="4">
    <location>
        <begin position="368"/>
        <end position="434"/>
    </location>
</feature>
<feature type="region of interest" description="Disordered" evidence="4">
    <location>
        <begin position="483"/>
        <end position="550"/>
    </location>
</feature>
<feature type="region of interest" description="Disordered" evidence="4">
    <location>
        <begin position="716"/>
        <end position="769"/>
    </location>
</feature>
<feature type="coiled-coil region" evidence="2">
    <location>
        <begin position="363"/>
        <end position="424"/>
    </location>
</feature>
<feature type="compositionally biased region" description="Acidic residues" evidence="4">
    <location>
        <begin position="161"/>
        <end position="176"/>
    </location>
</feature>
<feature type="compositionally biased region" description="Basic and acidic residues" evidence="4">
    <location>
        <begin position="310"/>
        <end position="323"/>
    </location>
</feature>
<feature type="compositionally biased region" description="Basic and acidic residues" evidence="4">
    <location>
        <begin position="368"/>
        <end position="391"/>
    </location>
</feature>
<feature type="compositionally biased region" description="Polar residues" evidence="4">
    <location>
        <begin position="392"/>
        <end position="403"/>
    </location>
</feature>
<feature type="compositionally biased region" description="Basic and acidic residues" evidence="4">
    <location>
        <begin position="418"/>
        <end position="434"/>
    </location>
</feature>
<feature type="compositionally biased region" description="Low complexity" evidence="4">
    <location>
        <begin position="487"/>
        <end position="499"/>
    </location>
</feature>
<feature type="compositionally biased region" description="Low complexity" evidence="4">
    <location>
        <begin position="730"/>
        <end position="749"/>
    </location>
</feature>
<feature type="compositionally biased region" description="Polar residues" evidence="4">
    <location>
        <begin position="750"/>
        <end position="766"/>
    </location>
</feature>
<feature type="modified residue" description="Phosphoserine" evidence="1">
    <location>
        <position position="109"/>
    </location>
</feature>
<feature type="modified residue" description="Phosphoserine" evidence="1">
    <location>
        <position position="133"/>
    </location>
</feature>
<feature type="modified residue" description="Phosphoserine" evidence="1">
    <location>
        <position position="150"/>
    </location>
</feature>
<feature type="modified residue" description="Phosphoserine" evidence="1">
    <location>
        <position position="172"/>
    </location>
</feature>
<feature type="modified residue" description="Phosphoserine" evidence="1">
    <location>
        <position position="291"/>
    </location>
</feature>
<feature type="modified residue" description="Phosphothreonine" evidence="1">
    <location>
        <position position="322"/>
    </location>
</feature>
<feature type="modified residue" description="Phosphoserine" evidence="1">
    <location>
        <position position="371"/>
    </location>
</feature>
<feature type="cross-link" description="Glycyl lysine isopeptide (Lys-Gly) (interchain with G-Cter in SUMO2)" evidence="1">
    <location>
        <position position="115"/>
    </location>
</feature>
<feature type="cross-link" description="Glycyl lysine isopeptide (Lys-Gly) (interchain with G-Cter in SUMO2)" evidence="1">
    <location>
        <position position="125"/>
    </location>
</feature>
<feature type="cross-link" description="Glycyl lysine isopeptide (Lys-Gly) (interchain with G-Cter in SUMO2)" evidence="1">
    <location>
        <position position="141"/>
    </location>
</feature>
<feature type="cross-link" description="Glycyl lysine isopeptide (Lys-Gly) (interchain with G-Cter in SUMO2)" evidence="1">
    <location>
        <position position="479"/>
    </location>
</feature>
<feature type="cross-link" description="Glycyl lysine isopeptide (Lys-Gly) (interchain with G-Cter in SUMO2)" evidence="1">
    <location>
        <position position="620"/>
    </location>
</feature>